<reference key="1">
    <citation type="journal article" date="1999" name="Plant Mol. Biol.">
        <title>Evidence for functional convergence of redox regulation in G6PDH isoforms of cyanobacteria and higher plants.</title>
        <authorList>
            <person name="Wendt U.K."/>
            <person name="Hauschild R."/>
            <person name="Lange C."/>
            <person name="Pietersma M."/>
            <person name="Wenderoth I."/>
            <person name="von Schaewen A."/>
        </authorList>
    </citation>
    <scope>NUCLEOTIDE SEQUENCE [MRNA]</scope>
</reference>
<reference key="2">
    <citation type="journal article" date="1998" name="DNA Res.">
        <title>Structural analysis of Arabidopsis thaliana chromosome 5. VII. Sequence features of the regions of 1,013,767 bp covered by sixteen physically assigned P1 and TAC clones.</title>
        <authorList>
            <person name="Nakamura Y."/>
            <person name="Sato S."/>
            <person name="Asamizu E."/>
            <person name="Kaneko T."/>
            <person name="Kotani H."/>
            <person name="Miyajima N."/>
            <person name="Tabata S."/>
        </authorList>
    </citation>
    <scope>NUCLEOTIDE SEQUENCE [LARGE SCALE GENOMIC DNA]</scope>
    <source>
        <strain>cv. Columbia</strain>
    </source>
</reference>
<reference key="3">
    <citation type="journal article" date="1998" name="DNA Res.">
        <title>Structural analysis of Arabidopsis thaliana chromosome 5. IV. Sequence features of the regions of 1,456,315 bp covered by nineteen physically assigned P1 and TAC clones.</title>
        <authorList>
            <person name="Sato S."/>
            <person name="Kaneko T."/>
            <person name="Kotani H."/>
            <person name="Nakamura Y."/>
            <person name="Asamizu E."/>
            <person name="Miyajima N."/>
            <person name="Tabata S."/>
        </authorList>
    </citation>
    <scope>NUCLEOTIDE SEQUENCE [LARGE SCALE GENOMIC DNA]</scope>
    <source>
        <strain>cv. Columbia</strain>
    </source>
</reference>
<reference key="4">
    <citation type="journal article" date="2017" name="Plant J.">
        <title>Araport11: a complete reannotation of the Arabidopsis thaliana reference genome.</title>
        <authorList>
            <person name="Cheng C.Y."/>
            <person name="Krishnakumar V."/>
            <person name="Chan A.P."/>
            <person name="Thibaud-Nissen F."/>
            <person name="Schobel S."/>
            <person name="Town C.D."/>
        </authorList>
    </citation>
    <scope>GENOME REANNOTATION</scope>
    <source>
        <strain>cv. Columbia</strain>
    </source>
</reference>
<reference key="5">
    <citation type="journal article" date="2003" name="Science">
        <title>Empirical analysis of transcriptional activity in the Arabidopsis genome.</title>
        <authorList>
            <person name="Yamada K."/>
            <person name="Lim J."/>
            <person name="Dale J.M."/>
            <person name="Chen H."/>
            <person name="Shinn P."/>
            <person name="Palm C.J."/>
            <person name="Southwick A.M."/>
            <person name="Wu H.C."/>
            <person name="Kim C.J."/>
            <person name="Nguyen M."/>
            <person name="Pham P.K."/>
            <person name="Cheuk R.F."/>
            <person name="Karlin-Newmann G."/>
            <person name="Liu S.X."/>
            <person name="Lam B."/>
            <person name="Sakano H."/>
            <person name="Wu T."/>
            <person name="Yu G."/>
            <person name="Miranda M."/>
            <person name="Quach H.L."/>
            <person name="Tripp M."/>
            <person name="Chang C.H."/>
            <person name="Lee J.M."/>
            <person name="Toriumi M.J."/>
            <person name="Chan M.M."/>
            <person name="Tang C.C."/>
            <person name="Onodera C.S."/>
            <person name="Deng J.M."/>
            <person name="Akiyama K."/>
            <person name="Ansari Y."/>
            <person name="Arakawa T."/>
            <person name="Banh J."/>
            <person name="Banno F."/>
            <person name="Bowser L."/>
            <person name="Brooks S.Y."/>
            <person name="Carninci P."/>
            <person name="Chao Q."/>
            <person name="Choy N."/>
            <person name="Enju A."/>
            <person name="Goldsmith A.D."/>
            <person name="Gurjal M."/>
            <person name="Hansen N.F."/>
            <person name="Hayashizaki Y."/>
            <person name="Johnson-Hopson C."/>
            <person name="Hsuan V.W."/>
            <person name="Iida K."/>
            <person name="Karnes M."/>
            <person name="Khan S."/>
            <person name="Koesema E."/>
            <person name="Ishida J."/>
            <person name="Jiang P.X."/>
            <person name="Jones T."/>
            <person name="Kawai J."/>
            <person name="Kamiya A."/>
            <person name="Meyers C."/>
            <person name="Nakajima M."/>
            <person name="Narusaka M."/>
            <person name="Seki M."/>
            <person name="Sakurai T."/>
            <person name="Satou M."/>
            <person name="Tamse R."/>
            <person name="Vaysberg M."/>
            <person name="Wallender E.K."/>
            <person name="Wong C."/>
            <person name="Yamamura Y."/>
            <person name="Yuan S."/>
            <person name="Shinozaki K."/>
            <person name="Davis R.W."/>
            <person name="Theologis A."/>
            <person name="Ecker J.R."/>
        </authorList>
    </citation>
    <scope>NUCLEOTIDE SEQUENCE [LARGE SCALE MRNA]</scope>
    <source>
        <strain>cv. Columbia</strain>
    </source>
</reference>
<reference key="6">
    <citation type="journal article" date="2005" name="Plant J.">
        <title>Genome-wide analysis of glucose-6-phosphate dehydrogenases in Arabidopsis.</title>
        <authorList>
            <person name="Wakao S."/>
            <person name="Benning C."/>
        </authorList>
    </citation>
    <scope>FUNCTION</scope>
    <scope>CATALYTIC ACTIVITY</scope>
    <scope>BIOPHYSICOCHEMICAL PROPERTIES</scope>
    <scope>TISSUE SPECIFICITY</scope>
</reference>
<reference key="7">
    <citation type="journal article" date="2011" name="Plant J.">
        <title>Alternative targeting of Arabidopsis plastidic glucose-6-phosphate dehydrogenase G6PD1 involves cysteine-dependent interaction with G6PD4 in the cytosol.</title>
        <authorList>
            <person name="Meyer T."/>
            <person name="Hoelscher C."/>
            <person name="Schwoeppe C."/>
            <person name="von Schaewen A."/>
        </authorList>
    </citation>
    <scope>SUBCELLULAR LOCATION</scope>
</reference>
<keyword id="KW-0119">Carbohydrate metabolism</keyword>
<keyword id="KW-0963">Cytoplasm</keyword>
<keyword id="KW-0313">Glucose metabolism</keyword>
<keyword id="KW-0521">NADP</keyword>
<keyword id="KW-0560">Oxidoreductase</keyword>
<keyword id="KW-1185">Reference proteome</keyword>
<organism>
    <name type="scientific">Arabidopsis thaliana</name>
    <name type="common">Mouse-ear cress</name>
    <dbReference type="NCBI Taxonomy" id="3702"/>
    <lineage>
        <taxon>Eukaryota</taxon>
        <taxon>Viridiplantae</taxon>
        <taxon>Streptophyta</taxon>
        <taxon>Embryophyta</taxon>
        <taxon>Tracheophyta</taxon>
        <taxon>Spermatophyta</taxon>
        <taxon>Magnoliopsida</taxon>
        <taxon>eudicotyledons</taxon>
        <taxon>Gunneridae</taxon>
        <taxon>Pentapetalae</taxon>
        <taxon>rosids</taxon>
        <taxon>malvids</taxon>
        <taxon>Brassicales</taxon>
        <taxon>Brassicaceae</taxon>
        <taxon>Camelineae</taxon>
        <taxon>Arabidopsis</taxon>
    </lineage>
</organism>
<protein>
    <recommendedName>
        <fullName evidence="9">Glucose-6-phosphate 1-dehydrogenase 6, cytoplasmic</fullName>
        <shortName evidence="8">AtG6PD6</shortName>
        <shortName evidence="9">G6PDH6</shortName>
        <ecNumber evidence="4">1.1.1.49</ecNumber>
    </recommendedName>
</protein>
<proteinExistence type="evidence at protein level"/>
<sequence length="515" mass="59116">MGSGQWHVEKRSTFRNDSFVREYGIVPETGCLSIIVLGASGDLAKKKTFPALFNLYRQGFLNPDEVHIFGYARTKISDEELRDRIRGYLVDEKNAEQAEALSKFLQLIKYVSGPYDAEEGFQRLDKAISEHEISKNSTEGSSRRLFYLALPPSVYPSVCKMIKTCCMNKSDLGGWTRIVVEKPFGKDLESAEQLSSQIGELFDESQIYRIDHYLGKELVQNMLVLRFANRFFLPLWNRDNIENVQIVFREDFGTEGRGGYFDEYGIIRDIIQNHLLQVLCLVAMEKPISLKPEHIRDEKVKVLQSVVPISDDEVVLGQYEGYRDDDTVPNDSNTPTFATTILRIHNERWEGVPFILKAGKALNSRKAEIRIQFKDVPGDIFRCQKQGRNEFVIRLQPSEAMYMKLTVKQPGLDMNTVQSELDLSYGQRYQGVAIPEAYERLILDTIKGDQQHFVRRDELKVAWEIFTPLLHRIDKGEVKSIPYKPGSRGPKEADQLLEKAGYLQTHGYIWIPPTL</sequence>
<gene>
    <name evidence="8" type="primary">G6PD6</name>
    <name evidence="6" type="synonym">ACG12</name>
    <name evidence="10" type="ordered locus">At5g40760</name>
    <name type="ORF">K1B16.1</name>
    <name type="ORF">MNF13.6</name>
</gene>
<feature type="chain" id="PRO_0000068098" description="Glucose-6-phosphate 1-dehydrogenase 6, cytoplasmic">
    <location>
        <begin position="1"/>
        <end position="515"/>
    </location>
</feature>
<feature type="active site" description="Proton acceptor" evidence="1">
    <location>
        <position position="274"/>
    </location>
</feature>
<feature type="binding site" evidence="2">
    <location>
        <begin position="38"/>
        <end position="45"/>
    </location>
    <ligand>
        <name>NADP(+)</name>
        <dbReference type="ChEBI" id="CHEBI:58349"/>
        <label>1</label>
    </ligand>
</feature>
<feature type="binding site" evidence="2">
    <location>
        <position position="73"/>
    </location>
    <ligand>
        <name>NADP(+)</name>
        <dbReference type="ChEBI" id="CHEBI:58349"/>
        <label>1</label>
    </ligand>
</feature>
<feature type="binding site" evidence="2">
    <location>
        <position position="155"/>
    </location>
    <ligand>
        <name>NADP(+)</name>
        <dbReference type="ChEBI" id="CHEBI:58349"/>
        <label>1</label>
    </ligand>
</feature>
<feature type="binding site" evidence="2">
    <location>
        <position position="182"/>
    </location>
    <ligand>
        <name>D-glucose 6-phosphate</name>
        <dbReference type="ChEBI" id="CHEBI:61548"/>
    </ligand>
</feature>
<feature type="binding site" evidence="2">
    <location>
        <position position="182"/>
    </location>
    <ligand>
        <name>NADP(+)</name>
        <dbReference type="ChEBI" id="CHEBI:58349"/>
        <label>1</label>
    </ligand>
</feature>
<feature type="binding site" evidence="2">
    <location>
        <begin position="212"/>
        <end position="216"/>
    </location>
    <ligand>
        <name>D-glucose 6-phosphate</name>
        <dbReference type="ChEBI" id="CHEBI:61548"/>
    </ligand>
</feature>
<feature type="binding site" evidence="2">
    <location>
        <position position="250"/>
    </location>
    <ligand>
        <name>D-glucose 6-phosphate</name>
        <dbReference type="ChEBI" id="CHEBI:61548"/>
    </ligand>
</feature>
<feature type="binding site" evidence="2">
    <location>
        <position position="269"/>
    </location>
    <ligand>
        <name>D-glucose 6-phosphate</name>
        <dbReference type="ChEBI" id="CHEBI:61548"/>
    </ligand>
</feature>
<feature type="binding site" evidence="2">
    <location>
        <position position="357"/>
    </location>
    <ligand>
        <name>NADP(+)</name>
        <dbReference type="ChEBI" id="CHEBI:58349"/>
        <label>2</label>
    </ligand>
</feature>
<feature type="binding site" evidence="2">
    <location>
        <position position="360"/>
    </location>
    <ligand>
        <name>D-glucose 6-phosphate</name>
        <dbReference type="ChEBI" id="CHEBI:61548"/>
    </ligand>
</feature>
<feature type="binding site" evidence="2">
    <location>
        <position position="365"/>
    </location>
    <ligand>
        <name>D-glucose 6-phosphate</name>
        <dbReference type="ChEBI" id="CHEBI:61548"/>
    </ligand>
</feature>
<feature type="binding site" evidence="2">
    <location>
        <position position="366"/>
    </location>
    <ligand>
        <name>NADP(+)</name>
        <dbReference type="ChEBI" id="CHEBI:58349"/>
        <label>2</label>
    </ligand>
</feature>
<feature type="binding site" evidence="2">
    <location>
        <position position="370"/>
    </location>
    <ligand>
        <name>NADP(+)</name>
        <dbReference type="ChEBI" id="CHEBI:58349"/>
        <label>2</label>
    </ligand>
</feature>
<feature type="binding site" evidence="2">
    <location>
        <position position="394"/>
    </location>
    <ligand>
        <name>NADP(+)</name>
        <dbReference type="ChEBI" id="CHEBI:58349"/>
        <label>2</label>
    </ligand>
</feature>
<feature type="binding site" evidence="2">
    <location>
        <position position="396"/>
    </location>
    <ligand>
        <name>D-glucose 6-phosphate</name>
        <dbReference type="ChEBI" id="CHEBI:61548"/>
    </ligand>
</feature>
<feature type="binding site" evidence="2">
    <location>
        <begin position="402"/>
        <end position="404"/>
    </location>
    <ligand>
        <name>NADP(+)</name>
        <dbReference type="ChEBI" id="CHEBI:58349"/>
        <label>2</label>
    </ligand>
</feature>
<feature type="binding site" evidence="2">
    <location>
        <begin position="422"/>
        <end position="424"/>
    </location>
    <ligand>
        <name>NADP(+)</name>
        <dbReference type="ChEBI" id="CHEBI:58349"/>
        <label>2</label>
    </ligand>
</feature>
<feature type="binding site" evidence="2">
    <location>
        <position position="488"/>
    </location>
    <ligand>
        <name>NADP(+)</name>
        <dbReference type="ChEBI" id="CHEBI:58349"/>
        <label>2</label>
    </ligand>
</feature>
<feature type="binding site" evidence="2">
    <location>
        <position position="510"/>
    </location>
    <ligand>
        <name>NADP(+)</name>
        <dbReference type="ChEBI" id="CHEBI:58349"/>
        <label>2</label>
    </ligand>
</feature>
<feature type="sequence conflict" description="In Ref. 1; CAB52675." evidence="9" ref="1">
    <original>A</original>
    <variation>S</variation>
    <location>
        <position position="361"/>
    </location>
</feature>
<evidence type="ECO:0000250" key="1">
    <source>
        <dbReference type="UniProtKB" id="P11411"/>
    </source>
</evidence>
<evidence type="ECO:0000250" key="2">
    <source>
        <dbReference type="UniProtKB" id="P11413"/>
    </source>
</evidence>
<evidence type="ECO:0000250" key="3">
    <source>
        <dbReference type="UniProtKB" id="Q43839"/>
    </source>
</evidence>
<evidence type="ECO:0000269" key="4">
    <source>
    </source>
</evidence>
<evidence type="ECO:0000269" key="5">
    <source>
    </source>
</evidence>
<evidence type="ECO:0000303" key="6">
    <source>
    </source>
</evidence>
<evidence type="ECO:0000303" key="7">
    <source>
    </source>
</evidence>
<evidence type="ECO:0000303" key="8">
    <source>
    </source>
</evidence>
<evidence type="ECO:0000305" key="9"/>
<evidence type="ECO:0000312" key="10">
    <source>
        <dbReference type="EMBL" id="BAB08837.1"/>
    </source>
</evidence>
<name>G6PD6_ARATH</name>
<comment type="function">
    <text evidence="4">Catalyzes the rate-limiting step of the oxidative pentose-phosphate pathway, which represents a route for the dissimilation of carbohydrates besides glycolysis (PubMed:15634201). The main function of this enzyme is to provide reducing power (NADPH) and pentose phosphates for fatty acid and nucleic acid synthesis which are involved in membrane synthesis and cell division (PubMed:15634201).</text>
</comment>
<comment type="catalytic activity">
    <reaction evidence="4">
        <text>D-glucose 6-phosphate + NADP(+) = 6-phospho-D-glucono-1,5-lactone + NADPH + H(+)</text>
        <dbReference type="Rhea" id="RHEA:15841"/>
        <dbReference type="ChEBI" id="CHEBI:15378"/>
        <dbReference type="ChEBI" id="CHEBI:57783"/>
        <dbReference type="ChEBI" id="CHEBI:57955"/>
        <dbReference type="ChEBI" id="CHEBI:58349"/>
        <dbReference type="ChEBI" id="CHEBI:61548"/>
        <dbReference type="EC" id="1.1.1.49"/>
    </reaction>
</comment>
<comment type="activity regulation">
    <text evidence="3">Regulated by metabolites.</text>
</comment>
<comment type="biophysicochemical properties">
    <kinetics>
        <KM evidence="4">6.5 mM for NADP</KM>
    </kinetics>
    <phDependence>
        <text evidence="4">Optimum pH is 8.0.</text>
    </phDependence>
</comment>
<comment type="pathway">
    <text evidence="9">Carbohydrate degradation; pentose phosphate pathway; D-ribulose 5-phosphate from D-glucose 6-phosphate (oxidative stage): step 1/3.</text>
</comment>
<comment type="subunit">
    <text evidence="1">Forms homodimer.</text>
</comment>
<comment type="subcellular location">
    <subcellularLocation>
        <location evidence="5">Cytoplasm</location>
        <location evidence="5">Cytosol</location>
    </subcellularLocation>
</comment>
<comment type="tissue specificity">
    <text evidence="4">Expressed in roots, leaves, stems, buds, flowers and siliques.</text>
</comment>
<comment type="miscellaneous">
    <text evidence="7">There are 6 glucose-6-phosphate 1-dehydrogenase genes in A.thaliana.</text>
</comment>
<comment type="similarity">
    <text evidence="9">Belongs to the glucose-6-phosphate dehydrogenase family.</text>
</comment>
<accession>Q9FJI5</accession>
<accession>Q9SUJ9</accession>
<dbReference type="EC" id="1.1.1.49" evidence="4"/>
<dbReference type="EMBL" id="AJ010971">
    <property type="protein sequence ID" value="CAB52675.1"/>
    <property type="molecule type" value="mRNA"/>
</dbReference>
<dbReference type="EMBL" id="AB015470">
    <property type="protein sequence ID" value="BAB08837.1"/>
    <property type="molecule type" value="Genomic_DNA"/>
</dbReference>
<dbReference type="EMBL" id="AB009052">
    <property type="status" value="NOT_ANNOTATED_CDS"/>
    <property type="molecule type" value="Genomic_DNA"/>
</dbReference>
<dbReference type="EMBL" id="CP002688">
    <property type="protein sequence ID" value="AED94591.1"/>
    <property type="molecule type" value="Genomic_DNA"/>
</dbReference>
<dbReference type="EMBL" id="CP002688">
    <property type="protein sequence ID" value="ANM68628.1"/>
    <property type="molecule type" value="Genomic_DNA"/>
</dbReference>
<dbReference type="EMBL" id="BT004633">
    <property type="protein sequence ID" value="AAO42879.1"/>
    <property type="molecule type" value="mRNA"/>
</dbReference>
<dbReference type="PIR" id="T52610">
    <property type="entry name" value="T52610"/>
</dbReference>
<dbReference type="RefSeq" id="NP_001330361.1">
    <property type="nucleotide sequence ID" value="NM_001344352.1"/>
</dbReference>
<dbReference type="RefSeq" id="NP_198892.1">
    <property type="nucleotide sequence ID" value="NM_123441.3"/>
</dbReference>
<dbReference type="SMR" id="Q9FJI5"/>
<dbReference type="FunCoup" id="Q9FJI5">
    <property type="interactions" value="2615"/>
</dbReference>
<dbReference type="STRING" id="3702.Q9FJI5"/>
<dbReference type="iPTMnet" id="Q9FJI5"/>
<dbReference type="PaxDb" id="3702-AT5G40760.1"/>
<dbReference type="ProteomicsDB" id="248601"/>
<dbReference type="EnsemblPlants" id="AT5G40760.1">
    <property type="protein sequence ID" value="AT5G40760.1"/>
    <property type="gene ID" value="AT5G40760"/>
</dbReference>
<dbReference type="EnsemblPlants" id="AT5G40760.2">
    <property type="protein sequence ID" value="AT5G40760.2"/>
    <property type="gene ID" value="AT5G40760"/>
</dbReference>
<dbReference type="GeneID" id="834076"/>
<dbReference type="Gramene" id="AT5G40760.1">
    <property type="protein sequence ID" value="AT5G40760.1"/>
    <property type="gene ID" value="AT5G40760"/>
</dbReference>
<dbReference type="Gramene" id="AT5G40760.2">
    <property type="protein sequence ID" value="AT5G40760.2"/>
    <property type="gene ID" value="AT5G40760"/>
</dbReference>
<dbReference type="KEGG" id="ath:AT5G40760"/>
<dbReference type="Araport" id="AT5G40760"/>
<dbReference type="TAIR" id="AT5G40760">
    <property type="gene designation" value="G6PD6"/>
</dbReference>
<dbReference type="eggNOG" id="KOG0563">
    <property type="taxonomic scope" value="Eukaryota"/>
</dbReference>
<dbReference type="HOGENOM" id="CLU_013524_2_3_1"/>
<dbReference type="InParanoid" id="Q9FJI5"/>
<dbReference type="OMA" id="ERAGYYE"/>
<dbReference type="PhylomeDB" id="Q9FJI5"/>
<dbReference type="BRENDA" id="1.1.1.49">
    <property type="organism ID" value="399"/>
</dbReference>
<dbReference type="UniPathway" id="UPA00115">
    <property type="reaction ID" value="UER00408"/>
</dbReference>
<dbReference type="PRO" id="PR:Q9FJI5"/>
<dbReference type="Proteomes" id="UP000006548">
    <property type="component" value="Chromosome 5"/>
</dbReference>
<dbReference type="ExpressionAtlas" id="Q9FJI5">
    <property type="expression patterns" value="baseline and differential"/>
</dbReference>
<dbReference type="GO" id="GO:0005829">
    <property type="term" value="C:cytosol"/>
    <property type="evidence" value="ECO:0000314"/>
    <property type="project" value="TAIR"/>
</dbReference>
<dbReference type="GO" id="GO:0004345">
    <property type="term" value="F:glucose-6-phosphate dehydrogenase activity"/>
    <property type="evidence" value="ECO:0000314"/>
    <property type="project" value="TAIR"/>
</dbReference>
<dbReference type="GO" id="GO:0050661">
    <property type="term" value="F:NADP binding"/>
    <property type="evidence" value="ECO:0007669"/>
    <property type="project" value="InterPro"/>
</dbReference>
<dbReference type="GO" id="GO:0006006">
    <property type="term" value="P:glucose metabolic process"/>
    <property type="evidence" value="ECO:0000314"/>
    <property type="project" value="TAIR"/>
</dbReference>
<dbReference type="GO" id="GO:0009051">
    <property type="term" value="P:pentose-phosphate shunt, oxidative branch"/>
    <property type="evidence" value="ECO:0000314"/>
    <property type="project" value="TAIR"/>
</dbReference>
<dbReference type="FunFam" id="3.30.360.10:FF:000013">
    <property type="entry name" value="Glucose-6-phosphate 1-dehydrogenase"/>
    <property type="match status" value="1"/>
</dbReference>
<dbReference type="FunFam" id="3.40.50.720:FF:000222">
    <property type="entry name" value="Glucose-6-phosphate 1-dehydrogenase"/>
    <property type="match status" value="1"/>
</dbReference>
<dbReference type="Gene3D" id="3.30.360.10">
    <property type="entry name" value="Dihydrodipicolinate Reductase, domain 2"/>
    <property type="match status" value="1"/>
</dbReference>
<dbReference type="Gene3D" id="3.40.50.720">
    <property type="entry name" value="NAD(P)-binding Rossmann-like Domain"/>
    <property type="match status" value="1"/>
</dbReference>
<dbReference type="HAMAP" id="MF_00966">
    <property type="entry name" value="G6PD"/>
    <property type="match status" value="1"/>
</dbReference>
<dbReference type="InterPro" id="IPR001282">
    <property type="entry name" value="G6P_DH"/>
</dbReference>
<dbReference type="InterPro" id="IPR019796">
    <property type="entry name" value="G6P_DH_AS"/>
</dbReference>
<dbReference type="InterPro" id="IPR022675">
    <property type="entry name" value="G6P_DH_C"/>
</dbReference>
<dbReference type="InterPro" id="IPR022674">
    <property type="entry name" value="G6P_DH_NAD-bd"/>
</dbReference>
<dbReference type="InterPro" id="IPR036291">
    <property type="entry name" value="NAD(P)-bd_dom_sf"/>
</dbReference>
<dbReference type="NCBIfam" id="TIGR00871">
    <property type="entry name" value="zwf"/>
    <property type="match status" value="1"/>
</dbReference>
<dbReference type="PANTHER" id="PTHR23429:SF0">
    <property type="entry name" value="GLUCOSE-6-PHOSPHATE 1-DEHYDROGENASE"/>
    <property type="match status" value="1"/>
</dbReference>
<dbReference type="PANTHER" id="PTHR23429">
    <property type="entry name" value="GLUCOSE-6-PHOSPHATE 1-DEHYDROGENASE G6PD"/>
    <property type="match status" value="1"/>
</dbReference>
<dbReference type="Pfam" id="PF02781">
    <property type="entry name" value="G6PD_C"/>
    <property type="match status" value="1"/>
</dbReference>
<dbReference type="Pfam" id="PF00479">
    <property type="entry name" value="G6PD_N"/>
    <property type="match status" value="1"/>
</dbReference>
<dbReference type="PIRSF" id="PIRSF000110">
    <property type="entry name" value="G6PD"/>
    <property type="match status" value="1"/>
</dbReference>
<dbReference type="PRINTS" id="PR00079">
    <property type="entry name" value="G6PDHDRGNASE"/>
</dbReference>
<dbReference type="SUPFAM" id="SSF55347">
    <property type="entry name" value="Glyceraldehyde-3-phosphate dehydrogenase-like, C-terminal domain"/>
    <property type="match status" value="1"/>
</dbReference>
<dbReference type="SUPFAM" id="SSF51735">
    <property type="entry name" value="NAD(P)-binding Rossmann-fold domains"/>
    <property type="match status" value="1"/>
</dbReference>
<dbReference type="PROSITE" id="PS00069">
    <property type="entry name" value="G6P_DEHYDROGENASE"/>
    <property type="match status" value="1"/>
</dbReference>